<gene>
    <name evidence="1" type="primary">glgA</name>
    <name type="ordered locus">BCE_5025</name>
</gene>
<evidence type="ECO:0000255" key="1">
    <source>
        <dbReference type="HAMAP-Rule" id="MF_00484"/>
    </source>
</evidence>
<comment type="function">
    <text evidence="1">Synthesizes alpha-1,4-glucan chains using ADP-glucose.</text>
</comment>
<comment type="catalytic activity">
    <reaction evidence="1">
        <text>[(1-&gt;4)-alpha-D-glucosyl](n) + ADP-alpha-D-glucose = [(1-&gt;4)-alpha-D-glucosyl](n+1) + ADP + H(+)</text>
        <dbReference type="Rhea" id="RHEA:18189"/>
        <dbReference type="Rhea" id="RHEA-COMP:9584"/>
        <dbReference type="Rhea" id="RHEA-COMP:9587"/>
        <dbReference type="ChEBI" id="CHEBI:15378"/>
        <dbReference type="ChEBI" id="CHEBI:15444"/>
        <dbReference type="ChEBI" id="CHEBI:57498"/>
        <dbReference type="ChEBI" id="CHEBI:456216"/>
        <dbReference type="EC" id="2.4.1.21"/>
    </reaction>
</comment>
<comment type="pathway">
    <text evidence="1">Glycan biosynthesis; glycogen biosynthesis.</text>
</comment>
<comment type="similarity">
    <text evidence="1">Belongs to the glycosyltransferase 1 family. Bacterial/plant glycogen synthase subfamily.</text>
</comment>
<dbReference type="EC" id="2.4.1.21" evidence="1"/>
<dbReference type="EMBL" id="AE017194">
    <property type="protein sequence ID" value="AAS43926.1"/>
    <property type="molecule type" value="Genomic_DNA"/>
</dbReference>
<dbReference type="SMR" id="Q72YJ6"/>
<dbReference type="CAZy" id="GT5">
    <property type="family name" value="Glycosyltransferase Family 5"/>
</dbReference>
<dbReference type="KEGG" id="bca:BCE_5025"/>
<dbReference type="HOGENOM" id="CLU_009583_18_2_9"/>
<dbReference type="UniPathway" id="UPA00164"/>
<dbReference type="Proteomes" id="UP000002527">
    <property type="component" value="Chromosome"/>
</dbReference>
<dbReference type="GO" id="GO:0009011">
    <property type="term" value="F:alpha-1,4-glucan glucosyltransferase (ADP-glucose donor) activity"/>
    <property type="evidence" value="ECO:0007669"/>
    <property type="project" value="UniProtKB-UniRule"/>
</dbReference>
<dbReference type="GO" id="GO:0004373">
    <property type="term" value="F:alpha-1,4-glucan glucosyltransferase (UDP-glucose donor) activity"/>
    <property type="evidence" value="ECO:0007669"/>
    <property type="project" value="InterPro"/>
</dbReference>
<dbReference type="GO" id="GO:0005978">
    <property type="term" value="P:glycogen biosynthetic process"/>
    <property type="evidence" value="ECO:0007669"/>
    <property type="project" value="UniProtKB-UniRule"/>
</dbReference>
<dbReference type="CDD" id="cd03791">
    <property type="entry name" value="GT5_Glycogen_synthase_DULL1-like"/>
    <property type="match status" value="1"/>
</dbReference>
<dbReference type="FunFam" id="3.40.50.2000:FF:000175">
    <property type="entry name" value="Glycogen synthase"/>
    <property type="match status" value="1"/>
</dbReference>
<dbReference type="Gene3D" id="3.40.50.2000">
    <property type="entry name" value="Glycogen Phosphorylase B"/>
    <property type="match status" value="2"/>
</dbReference>
<dbReference type="HAMAP" id="MF_00484">
    <property type="entry name" value="Glycogen_synth"/>
    <property type="match status" value="1"/>
</dbReference>
<dbReference type="InterPro" id="IPR001296">
    <property type="entry name" value="Glyco_trans_1"/>
</dbReference>
<dbReference type="InterPro" id="IPR011835">
    <property type="entry name" value="GS/SS"/>
</dbReference>
<dbReference type="InterPro" id="IPR013534">
    <property type="entry name" value="Starch_synth_cat_dom"/>
</dbReference>
<dbReference type="NCBIfam" id="TIGR02095">
    <property type="entry name" value="glgA"/>
    <property type="match status" value="1"/>
</dbReference>
<dbReference type="NCBIfam" id="NF001898">
    <property type="entry name" value="PRK00654.1-1"/>
    <property type="match status" value="1"/>
</dbReference>
<dbReference type="NCBIfam" id="NF001899">
    <property type="entry name" value="PRK00654.1-2"/>
    <property type="match status" value="1"/>
</dbReference>
<dbReference type="PANTHER" id="PTHR45825:SF11">
    <property type="entry name" value="ALPHA AMYLASE DOMAIN-CONTAINING PROTEIN"/>
    <property type="match status" value="1"/>
</dbReference>
<dbReference type="PANTHER" id="PTHR45825">
    <property type="entry name" value="GRANULE-BOUND STARCH SYNTHASE 1, CHLOROPLASTIC/AMYLOPLASTIC"/>
    <property type="match status" value="1"/>
</dbReference>
<dbReference type="Pfam" id="PF08323">
    <property type="entry name" value="Glyco_transf_5"/>
    <property type="match status" value="1"/>
</dbReference>
<dbReference type="Pfam" id="PF00534">
    <property type="entry name" value="Glycos_transf_1"/>
    <property type="match status" value="1"/>
</dbReference>
<dbReference type="SUPFAM" id="SSF53756">
    <property type="entry name" value="UDP-Glycosyltransferase/glycogen phosphorylase"/>
    <property type="match status" value="1"/>
</dbReference>
<sequence>MNILFAVSECVPFVKSGGLADVAGALPKELKKLGVEVRIILPNYSLIPQKLRDGCTLHKVINVPLGWRNQYCGILKGEQDGITYYLIDNEYYFKRDSLYGHYDDGERFSYFSKAVLECIPHLDFEVDVLHSHDWHTAMVNFLLREKYQDNPLYEHIKTVYTIHNLQFQGVFPPEVMYDLLELGDEYFHSEQLEFYGNVNFMKGGIIASDQITAVSPTYKEEIQYEFFGEKLDGLLRKYNGKLSGIVNGIDTSVYNPETDSYITAQYDADSLYEKSKNKRALQRYFGLPEKEDTPIISMVTRLTKQKGLDLVRTVFREIMEEDVQCIILGSGDSEYEKFFEWMAYEYPEKVKVYIGFNEELAHQVYAGSDLFLMPSLFEPCGLGQLIALAYGTIPIVRETGGLNDTVQSYDEETGEGNGFSFTNFNAHDMLHTVRRAIEFYHDKPVWEQLVKQAMTEDYSWGKSALAYKKLYKSLME</sequence>
<feature type="chain" id="PRO_0000188591" description="Glycogen synthase">
    <location>
        <begin position="1"/>
        <end position="476"/>
    </location>
</feature>
<feature type="binding site" evidence="1">
    <location>
        <position position="15"/>
    </location>
    <ligand>
        <name>ADP-alpha-D-glucose</name>
        <dbReference type="ChEBI" id="CHEBI:57498"/>
    </ligand>
</feature>
<name>GLGA_BACC1</name>
<keyword id="KW-0320">Glycogen biosynthesis</keyword>
<keyword id="KW-0328">Glycosyltransferase</keyword>
<keyword id="KW-0808">Transferase</keyword>
<proteinExistence type="inferred from homology"/>
<accession>Q72YJ6</accession>
<organism>
    <name type="scientific">Bacillus cereus (strain ATCC 10987 / NRS 248)</name>
    <dbReference type="NCBI Taxonomy" id="222523"/>
    <lineage>
        <taxon>Bacteria</taxon>
        <taxon>Bacillati</taxon>
        <taxon>Bacillota</taxon>
        <taxon>Bacilli</taxon>
        <taxon>Bacillales</taxon>
        <taxon>Bacillaceae</taxon>
        <taxon>Bacillus</taxon>
        <taxon>Bacillus cereus group</taxon>
    </lineage>
</organism>
<protein>
    <recommendedName>
        <fullName evidence="1">Glycogen synthase</fullName>
        <ecNumber evidence="1">2.4.1.21</ecNumber>
    </recommendedName>
    <alternativeName>
        <fullName evidence="1">Starch [bacterial glycogen] synthase</fullName>
    </alternativeName>
</protein>
<reference key="1">
    <citation type="journal article" date="2004" name="Nucleic Acids Res.">
        <title>The genome sequence of Bacillus cereus ATCC 10987 reveals metabolic adaptations and a large plasmid related to Bacillus anthracis pXO1.</title>
        <authorList>
            <person name="Rasko D.A."/>
            <person name="Ravel J."/>
            <person name="Oekstad O.A."/>
            <person name="Helgason E."/>
            <person name="Cer R.Z."/>
            <person name="Jiang L."/>
            <person name="Shores K.A."/>
            <person name="Fouts D.E."/>
            <person name="Tourasse N.J."/>
            <person name="Angiuoli S.V."/>
            <person name="Kolonay J.F."/>
            <person name="Nelson W.C."/>
            <person name="Kolstoe A.-B."/>
            <person name="Fraser C.M."/>
            <person name="Read T.D."/>
        </authorList>
    </citation>
    <scope>NUCLEOTIDE SEQUENCE [LARGE SCALE GENOMIC DNA]</scope>
    <source>
        <strain>ATCC 10987 / NRS 248</strain>
    </source>
</reference>